<accession>P0CX55</accession>
<accession>D6VT75</accession>
<accession>P35271</accession>
<organism>
    <name type="scientific">Saccharomyces cerevisiae (strain ATCC 204508 / S288c)</name>
    <name type="common">Baker's yeast</name>
    <dbReference type="NCBI Taxonomy" id="559292"/>
    <lineage>
        <taxon>Eukaryota</taxon>
        <taxon>Fungi</taxon>
        <taxon>Dikarya</taxon>
        <taxon>Ascomycota</taxon>
        <taxon>Saccharomycotina</taxon>
        <taxon>Saccharomycetes</taxon>
        <taxon>Saccharomycetales</taxon>
        <taxon>Saccharomycetaceae</taxon>
        <taxon>Saccharomyces</taxon>
    </lineage>
</organism>
<dbReference type="EMBL" id="U33007">
    <property type="protein sequence ID" value="AAB64891.1"/>
    <property type="molecule type" value="Genomic_DNA"/>
</dbReference>
<dbReference type="EMBL" id="BK006938">
    <property type="protein sequence ID" value="DAA12285.1"/>
    <property type="molecule type" value="Genomic_DNA"/>
</dbReference>
<dbReference type="PIR" id="S50886">
    <property type="entry name" value="S50886"/>
</dbReference>
<dbReference type="RefSeq" id="NP_010738.1">
    <property type="nucleotide sequence ID" value="NM_001180758.1"/>
</dbReference>
<dbReference type="PDB" id="3J6X">
    <property type="method" value="EM"/>
    <property type="resolution" value="6.10 A"/>
    <property type="chains" value="18=1-146"/>
</dbReference>
<dbReference type="PDB" id="3J6Y">
    <property type="method" value="EM"/>
    <property type="resolution" value="6.10 A"/>
    <property type="chains" value="18=1-146"/>
</dbReference>
<dbReference type="PDB" id="3J77">
    <property type="method" value="EM"/>
    <property type="resolution" value="6.20 A"/>
    <property type="chains" value="18=1-146"/>
</dbReference>
<dbReference type="PDB" id="3J78">
    <property type="method" value="EM"/>
    <property type="resolution" value="6.30 A"/>
    <property type="chains" value="18=1-146"/>
</dbReference>
<dbReference type="PDB" id="4U3M">
    <property type="method" value="X-ray"/>
    <property type="resolution" value="3.00 A"/>
    <property type="chains" value="C8/c8=2-146"/>
</dbReference>
<dbReference type="PDB" id="4U3N">
    <property type="method" value="X-ray"/>
    <property type="resolution" value="3.20 A"/>
    <property type="chains" value="C8/c8=2-146"/>
</dbReference>
<dbReference type="PDB" id="4U3U">
    <property type="method" value="X-ray"/>
    <property type="resolution" value="2.90 A"/>
    <property type="chains" value="C8/c8=2-146"/>
</dbReference>
<dbReference type="PDB" id="4U4N">
    <property type="method" value="X-ray"/>
    <property type="resolution" value="3.10 A"/>
    <property type="chains" value="C8/c8=2-146"/>
</dbReference>
<dbReference type="PDB" id="4U4O">
    <property type="method" value="X-ray"/>
    <property type="resolution" value="3.60 A"/>
    <property type="chains" value="C8/c8=2-146"/>
</dbReference>
<dbReference type="PDB" id="4U4Q">
    <property type="method" value="X-ray"/>
    <property type="resolution" value="3.00 A"/>
    <property type="chains" value="C8/c8=2-146"/>
</dbReference>
<dbReference type="PDB" id="4U4R">
    <property type="method" value="X-ray"/>
    <property type="resolution" value="2.80 A"/>
    <property type="chains" value="C8/c8=2-146"/>
</dbReference>
<dbReference type="PDB" id="4U4U">
    <property type="method" value="X-ray"/>
    <property type="resolution" value="3.00 A"/>
    <property type="chains" value="C8/c8=2-146"/>
</dbReference>
<dbReference type="PDB" id="4U4Y">
    <property type="method" value="X-ray"/>
    <property type="resolution" value="3.20 A"/>
    <property type="chains" value="C8/c8=2-146"/>
</dbReference>
<dbReference type="PDB" id="4U4Z">
    <property type="method" value="X-ray"/>
    <property type="resolution" value="3.10 A"/>
    <property type="chains" value="C8/c8=2-146"/>
</dbReference>
<dbReference type="PDB" id="4U50">
    <property type="method" value="X-ray"/>
    <property type="resolution" value="3.20 A"/>
    <property type="chains" value="C8/c8=2-146"/>
</dbReference>
<dbReference type="PDB" id="4U51">
    <property type="method" value="X-ray"/>
    <property type="resolution" value="3.20 A"/>
    <property type="chains" value="C8/c8=2-146"/>
</dbReference>
<dbReference type="PDB" id="4U52">
    <property type="method" value="X-ray"/>
    <property type="resolution" value="3.00 A"/>
    <property type="chains" value="C8/c8=2-146"/>
</dbReference>
<dbReference type="PDB" id="4U53">
    <property type="method" value="X-ray"/>
    <property type="resolution" value="3.30 A"/>
    <property type="chains" value="C8/c8=2-146"/>
</dbReference>
<dbReference type="PDB" id="4U55">
    <property type="method" value="X-ray"/>
    <property type="resolution" value="3.20 A"/>
    <property type="chains" value="C8/c8=2-146"/>
</dbReference>
<dbReference type="PDB" id="4U56">
    <property type="method" value="X-ray"/>
    <property type="resolution" value="3.45 A"/>
    <property type="chains" value="C8/c8=2-146"/>
</dbReference>
<dbReference type="PDB" id="4U6F">
    <property type="method" value="X-ray"/>
    <property type="resolution" value="3.10 A"/>
    <property type="chains" value="C8/c8=2-146"/>
</dbReference>
<dbReference type="PDB" id="4V4B">
    <property type="method" value="EM"/>
    <property type="resolution" value="11.70 A"/>
    <property type="chains" value="AM=15-146"/>
</dbReference>
<dbReference type="PDB" id="4V5Z">
    <property type="method" value="EM"/>
    <property type="resolution" value="8.70 A"/>
    <property type="chains" value="Am=1-144"/>
</dbReference>
<dbReference type="PDB" id="4V6I">
    <property type="method" value="EM"/>
    <property type="resolution" value="8.80 A"/>
    <property type="chains" value="AM=1-146"/>
</dbReference>
<dbReference type="PDB" id="4V7R">
    <property type="method" value="X-ray"/>
    <property type="resolution" value="4.00 A"/>
    <property type="chains" value="AL/CL=1-146"/>
</dbReference>
<dbReference type="PDB" id="4V88">
    <property type="method" value="X-ray"/>
    <property type="resolution" value="3.00 A"/>
    <property type="chains" value="AS/CS=1-146"/>
</dbReference>
<dbReference type="PDB" id="4V8Y">
    <property type="method" value="EM"/>
    <property type="resolution" value="4.30 A"/>
    <property type="chains" value="AS=1-146"/>
</dbReference>
<dbReference type="PDB" id="4V8Z">
    <property type="method" value="EM"/>
    <property type="resolution" value="6.60 A"/>
    <property type="chains" value="AS=1-146"/>
</dbReference>
<dbReference type="PDB" id="4V92">
    <property type="method" value="EM"/>
    <property type="resolution" value="3.70 A"/>
    <property type="chains" value="S=2-141"/>
</dbReference>
<dbReference type="PDB" id="5DAT">
    <property type="method" value="X-ray"/>
    <property type="resolution" value="3.15 A"/>
    <property type="chains" value="C8/c8=2-146"/>
</dbReference>
<dbReference type="PDB" id="5DC3">
    <property type="method" value="X-ray"/>
    <property type="resolution" value="3.25 A"/>
    <property type="chains" value="C8/c8=2-146"/>
</dbReference>
<dbReference type="PDB" id="5DGE">
    <property type="method" value="X-ray"/>
    <property type="resolution" value="3.45 A"/>
    <property type="chains" value="C8/c8=2-146"/>
</dbReference>
<dbReference type="PDB" id="5DGF">
    <property type="method" value="X-ray"/>
    <property type="resolution" value="3.30 A"/>
    <property type="chains" value="C8/c8=2-146"/>
</dbReference>
<dbReference type="PDB" id="5DGV">
    <property type="method" value="X-ray"/>
    <property type="resolution" value="3.10 A"/>
    <property type="chains" value="C8/c8=2-146"/>
</dbReference>
<dbReference type="PDB" id="5FCI">
    <property type="method" value="X-ray"/>
    <property type="resolution" value="3.40 A"/>
    <property type="chains" value="C8/c8=2-146"/>
</dbReference>
<dbReference type="PDB" id="5FCJ">
    <property type="method" value="X-ray"/>
    <property type="resolution" value="3.10 A"/>
    <property type="chains" value="C8/c8=2-146"/>
</dbReference>
<dbReference type="PDB" id="5I4L">
    <property type="method" value="X-ray"/>
    <property type="resolution" value="3.10 A"/>
    <property type="chains" value="C8/c8=2-146"/>
</dbReference>
<dbReference type="PDB" id="5JUO">
    <property type="method" value="EM"/>
    <property type="resolution" value="4.00 A"/>
    <property type="chains" value="PB=1-146"/>
</dbReference>
<dbReference type="PDB" id="5JUP">
    <property type="method" value="EM"/>
    <property type="resolution" value="3.50 A"/>
    <property type="chains" value="PB=1-146"/>
</dbReference>
<dbReference type="PDB" id="5JUS">
    <property type="method" value="EM"/>
    <property type="resolution" value="4.20 A"/>
    <property type="chains" value="PB=1-146"/>
</dbReference>
<dbReference type="PDB" id="5JUT">
    <property type="method" value="EM"/>
    <property type="resolution" value="4.00 A"/>
    <property type="chains" value="PB=1-146"/>
</dbReference>
<dbReference type="PDB" id="5JUU">
    <property type="method" value="EM"/>
    <property type="resolution" value="4.00 A"/>
    <property type="chains" value="PB=1-146"/>
</dbReference>
<dbReference type="PDB" id="5LYB">
    <property type="method" value="X-ray"/>
    <property type="resolution" value="3.25 A"/>
    <property type="chains" value="C8/c8=2-146"/>
</dbReference>
<dbReference type="PDB" id="5M1J">
    <property type="method" value="EM"/>
    <property type="resolution" value="3.30 A"/>
    <property type="chains" value="S2=2-146"/>
</dbReference>
<dbReference type="PDB" id="5MC6">
    <property type="method" value="EM"/>
    <property type="resolution" value="3.80 A"/>
    <property type="chains" value="H=1-146"/>
</dbReference>
<dbReference type="PDB" id="5MEI">
    <property type="method" value="X-ray"/>
    <property type="resolution" value="3.50 A"/>
    <property type="chains" value="T/c8=2-146"/>
</dbReference>
<dbReference type="PDB" id="5NDG">
    <property type="method" value="X-ray"/>
    <property type="resolution" value="3.70 A"/>
    <property type="chains" value="C8/c8=2-146"/>
</dbReference>
<dbReference type="PDB" id="5NDV">
    <property type="method" value="X-ray"/>
    <property type="resolution" value="3.30 A"/>
    <property type="chains" value="C8/c8=2-146"/>
</dbReference>
<dbReference type="PDB" id="5NDW">
    <property type="method" value="X-ray"/>
    <property type="resolution" value="3.70 A"/>
    <property type="chains" value="C8/c8=2-146"/>
</dbReference>
<dbReference type="PDB" id="5OBM">
    <property type="method" value="X-ray"/>
    <property type="resolution" value="3.40 A"/>
    <property type="chains" value="C8/c8=2-146"/>
</dbReference>
<dbReference type="PDB" id="5ON6">
    <property type="method" value="X-ray"/>
    <property type="resolution" value="3.10 A"/>
    <property type="chains" value="T/c8=2-146"/>
</dbReference>
<dbReference type="PDB" id="5TBW">
    <property type="method" value="X-ray"/>
    <property type="resolution" value="3.00 A"/>
    <property type="chains" value="T/c8=2-146"/>
</dbReference>
<dbReference type="PDB" id="5TGA">
    <property type="method" value="X-ray"/>
    <property type="resolution" value="3.30 A"/>
    <property type="chains" value="C8/c8=2-146"/>
</dbReference>
<dbReference type="PDB" id="5TGM">
    <property type="method" value="X-ray"/>
    <property type="resolution" value="3.50 A"/>
    <property type="chains" value="C8/c8=2-146"/>
</dbReference>
<dbReference type="PDB" id="5WLC">
    <property type="method" value="EM"/>
    <property type="resolution" value="3.80 A"/>
    <property type="chains" value="L3=1-146"/>
</dbReference>
<dbReference type="PDB" id="6EML">
    <property type="method" value="EM"/>
    <property type="resolution" value="3.60 A"/>
    <property type="chains" value="H=1-146"/>
</dbReference>
<dbReference type="PDB" id="6FAI">
    <property type="method" value="EM"/>
    <property type="resolution" value="3.40 A"/>
    <property type="chains" value="S=1-146"/>
</dbReference>
<dbReference type="PDB" id="6GQ1">
    <property type="method" value="EM"/>
    <property type="resolution" value="4.40 A"/>
    <property type="chains" value="AI=2-146"/>
</dbReference>
<dbReference type="PDB" id="6GQB">
    <property type="method" value="EM"/>
    <property type="resolution" value="3.90 A"/>
    <property type="chains" value="AI=2-146"/>
</dbReference>
<dbReference type="PDB" id="6GQV">
    <property type="method" value="EM"/>
    <property type="resolution" value="4.00 A"/>
    <property type="chains" value="AI=2-146"/>
</dbReference>
<dbReference type="PDB" id="6HHQ">
    <property type="method" value="X-ray"/>
    <property type="resolution" value="3.10 A"/>
    <property type="chains" value="T/c8=1-146"/>
</dbReference>
<dbReference type="PDB" id="6I7O">
    <property type="method" value="EM"/>
    <property type="resolution" value="5.30 A"/>
    <property type="chains" value="H/Hb=2-146"/>
</dbReference>
<dbReference type="PDB" id="6KE6">
    <property type="method" value="EM"/>
    <property type="resolution" value="3.40 A"/>
    <property type="chains" value="ST=1-146"/>
</dbReference>
<dbReference type="PDB" id="6LQP">
    <property type="method" value="EM"/>
    <property type="resolution" value="3.20 A"/>
    <property type="chains" value="ST=1-146"/>
</dbReference>
<dbReference type="PDB" id="6LQU">
    <property type="method" value="EM"/>
    <property type="resolution" value="3.70 A"/>
    <property type="chains" value="ST=1-146"/>
</dbReference>
<dbReference type="PDB" id="6Q8Y">
    <property type="method" value="EM"/>
    <property type="resolution" value="3.10 A"/>
    <property type="chains" value="H=2-140"/>
</dbReference>
<dbReference type="PDB" id="6RBD">
    <property type="method" value="EM"/>
    <property type="resolution" value="3.47 A"/>
    <property type="chains" value="S=1-146"/>
</dbReference>
<dbReference type="PDB" id="6RBE">
    <property type="method" value="EM"/>
    <property type="resolution" value="3.80 A"/>
    <property type="chains" value="S=1-146"/>
</dbReference>
<dbReference type="PDB" id="6S47">
    <property type="method" value="EM"/>
    <property type="resolution" value="3.28 A"/>
    <property type="chains" value="BT=2-146"/>
</dbReference>
<dbReference type="PDB" id="6SNT">
    <property type="method" value="EM"/>
    <property type="resolution" value="2.80 A"/>
    <property type="chains" value="S=1-146"/>
</dbReference>
<dbReference type="PDB" id="6SV4">
    <property type="method" value="EM"/>
    <property type="resolution" value="3.30 A"/>
    <property type="chains" value="H/Hb/Hc=1-146"/>
</dbReference>
<dbReference type="PDB" id="6T4Q">
    <property type="method" value="EM"/>
    <property type="resolution" value="2.60 A"/>
    <property type="chains" value="SS=2-146"/>
</dbReference>
<dbReference type="PDB" id="6T7I">
    <property type="method" value="EM"/>
    <property type="resolution" value="3.20 A"/>
    <property type="chains" value="SS=1-146"/>
</dbReference>
<dbReference type="PDB" id="6T7T">
    <property type="method" value="EM"/>
    <property type="resolution" value="3.10 A"/>
    <property type="chains" value="SS=1-146"/>
</dbReference>
<dbReference type="PDB" id="6T83">
    <property type="method" value="EM"/>
    <property type="resolution" value="4.00 A"/>
    <property type="chains" value="Sb/t=1-146"/>
</dbReference>
<dbReference type="PDB" id="6TB3">
    <property type="method" value="EM"/>
    <property type="resolution" value="2.80 A"/>
    <property type="chains" value="H=2-146"/>
</dbReference>
<dbReference type="PDB" id="6TNU">
    <property type="method" value="EM"/>
    <property type="resolution" value="3.10 A"/>
    <property type="chains" value="H=2-146"/>
</dbReference>
<dbReference type="PDB" id="6WDR">
    <property type="method" value="EM"/>
    <property type="resolution" value="3.70 A"/>
    <property type="chains" value="S=2-136"/>
</dbReference>
<dbReference type="PDB" id="6WOO">
    <property type="method" value="EM"/>
    <property type="resolution" value="2.90 A"/>
    <property type="chains" value="SS=9-144"/>
</dbReference>
<dbReference type="PDB" id="6XIQ">
    <property type="method" value="EM"/>
    <property type="resolution" value="4.20 A"/>
    <property type="chains" value="AI=1-146"/>
</dbReference>
<dbReference type="PDB" id="6XIR">
    <property type="method" value="EM"/>
    <property type="resolution" value="3.20 A"/>
    <property type="chains" value="AI=1-146"/>
</dbReference>
<dbReference type="PDB" id="6Y7C">
    <property type="method" value="EM"/>
    <property type="resolution" value="3.80 A"/>
    <property type="chains" value="S=1-146"/>
</dbReference>
<dbReference type="PDB" id="6Z6J">
    <property type="method" value="EM"/>
    <property type="resolution" value="3.40 A"/>
    <property type="chains" value="SS=1-146"/>
</dbReference>
<dbReference type="PDB" id="6Z6K">
    <property type="method" value="EM"/>
    <property type="resolution" value="3.40 A"/>
    <property type="chains" value="SS=1-146"/>
</dbReference>
<dbReference type="PDB" id="6ZCE">
    <property type="method" value="EM"/>
    <property type="resolution" value="5.30 A"/>
    <property type="chains" value="T=1-146"/>
</dbReference>
<dbReference type="PDB" id="6ZQA">
    <property type="method" value="EM"/>
    <property type="resolution" value="4.40 A"/>
    <property type="chains" value="DS=1-146"/>
</dbReference>
<dbReference type="PDB" id="6ZQB">
    <property type="method" value="EM"/>
    <property type="resolution" value="3.90 A"/>
    <property type="chains" value="DS=1-122"/>
</dbReference>
<dbReference type="PDB" id="6ZQC">
    <property type="method" value="EM"/>
    <property type="resolution" value="3.80 A"/>
    <property type="chains" value="DS=1-146"/>
</dbReference>
<dbReference type="PDB" id="6ZQD">
    <property type="method" value="EM"/>
    <property type="resolution" value="3.80 A"/>
    <property type="chains" value="DS=1-146"/>
</dbReference>
<dbReference type="PDB" id="6ZQE">
    <property type="method" value="EM"/>
    <property type="resolution" value="7.10 A"/>
    <property type="chains" value="DS=1-146"/>
</dbReference>
<dbReference type="PDB" id="6ZQF">
    <property type="method" value="EM"/>
    <property type="resolution" value="4.90 A"/>
    <property type="chains" value="DS=1-146"/>
</dbReference>
<dbReference type="PDB" id="6ZQG">
    <property type="method" value="EM"/>
    <property type="resolution" value="3.50 A"/>
    <property type="chains" value="DS=1-122"/>
</dbReference>
<dbReference type="PDB" id="6ZU9">
    <property type="method" value="EM"/>
    <property type="resolution" value="6.20 A"/>
    <property type="chains" value="J=1-146"/>
</dbReference>
<dbReference type="PDB" id="6ZVI">
    <property type="method" value="EM"/>
    <property type="resolution" value="3.00 A"/>
    <property type="chains" value="A=2-146"/>
</dbReference>
<dbReference type="PDB" id="7A1G">
    <property type="method" value="EM"/>
    <property type="resolution" value="3.00 A"/>
    <property type="chains" value="I=2-146"/>
</dbReference>
<dbReference type="PDB" id="7AJT">
    <property type="method" value="EM"/>
    <property type="resolution" value="4.60 A"/>
    <property type="chains" value="DS=1-146"/>
</dbReference>
<dbReference type="PDB" id="7AJU">
    <property type="method" value="EM"/>
    <property type="resolution" value="3.80 A"/>
    <property type="chains" value="DS=1-146"/>
</dbReference>
<dbReference type="PDB" id="7B7D">
    <property type="method" value="EM"/>
    <property type="resolution" value="3.30 A"/>
    <property type="chains" value="H=2-146"/>
</dbReference>
<dbReference type="PDB" id="7D4I">
    <property type="method" value="EM"/>
    <property type="resolution" value="4.00 A"/>
    <property type="chains" value="ST=1-146"/>
</dbReference>
<dbReference type="PDB" id="7D5S">
    <property type="method" value="EM"/>
    <property type="resolution" value="4.60 A"/>
    <property type="chains" value="ST=1-146"/>
</dbReference>
<dbReference type="PDB" id="7D63">
    <property type="method" value="EM"/>
    <property type="resolution" value="12.30 A"/>
    <property type="chains" value="ST=1-146"/>
</dbReference>
<dbReference type="PDB" id="7MPI">
    <property type="method" value="EM"/>
    <property type="resolution" value="3.05 A"/>
    <property type="chains" value="BS=2-146"/>
</dbReference>
<dbReference type="PDB" id="7MPJ">
    <property type="method" value="EM"/>
    <property type="resolution" value="2.70 A"/>
    <property type="chains" value="BS=2-146"/>
</dbReference>
<dbReference type="PDB" id="7N8B">
    <property type="method" value="EM"/>
    <property type="resolution" value="3.05 A"/>
    <property type="chains" value="BS=2-146"/>
</dbReference>
<dbReference type="PDB" id="7NRC">
    <property type="method" value="EM"/>
    <property type="resolution" value="3.90 A"/>
    <property type="chains" value="SH=2-146"/>
</dbReference>
<dbReference type="PDB" id="7NRD">
    <property type="method" value="EM"/>
    <property type="resolution" value="4.36 A"/>
    <property type="chains" value="SH=2-146"/>
</dbReference>
<dbReference type="PDB" id="7SUK">
    <property type="method" value="EM"/>
    <property type="resolution" value="3.99 A"/>
    <property type="chains" value="L3=2-120"/>
</dbReference>
<dbReference type="PDB" id="7ZPQ">
    <property type="method" value="EM"/>
    <property type="resolution" value="3.47 A"/>
    <property type="chains" value="AS=2-146"/>
</dbReference>
<dbReference type="PDB" id="7ZRS">
    <property type="method" value="EM"/>
    <property type="resolution" value="4.80 A"/>
    <property type="chains" value="AS=2-146"/>
</dbReference>
<dbReference type="PDB" id="7ZUW">
    <property type="method" value="EM"/>
    <property type="resolution" value="4.30 A"/>
    <property type="chains" value="AS=2-146"/>
</dbReference>
<dbReference type="PDB" id="7ZUX">
    <property type="method" value="EM"/>
    <property type="resolution" value="2.50 A"/>
    <property type="chains" value="DS=2-146"/>
</dbReference>
<dbReference type="PDB" id="7ZW0">
    <property type="method" value="EM"/>
    <property type="resolution" value="2.40 A"/>
    <property type="chains" value="sH=1-146"/>
</dbReference>
<dbReference type="PDB" id="8BN3">
    <property type="method" value="EM"/>
    <property type="resolution" value="2.40 A"/>
    <property type="chains" value="C8=2-146"/>
</dbReference>
<dbReference type="PDB" id="8BQD">
    <property type="method" value="EM"/>
    <property type="resolution" value="3.90 A"/>
    <property type="chains" value="H=2-146"/>
</dbReference>
<dbReference type="PDB" id="8BQX">
    <property type="method" value="EM"/>
    <property type="resolution" value="3.80 A"/>
    <property type="chains" value="H=2-146"/>
</dbReference>
<dbReference type="PDB" id="8C00">
    <property type="method" value="EM"/>
    <property type="resolution" value="2.90 A"/>
    <property type="chains" value="H=1-146"/>
</dbReference>
<dbReference type="PDB" id="8C01">
    <property type="method" value="EM"/>
    <property type="resolution" value="2.70 A"/>
    <property type="chains" value="H=1-146"/>
</dbReference>
<dbReference type="PDB" id="8CAH">
    <property type="method" value="EM"/>
    <property type="resolution" value="3.00 A"/>
    <property type="chains" value="I=1-146"/>
</dbReference>
<dbReference type="PDB" id="8CAS">
    <property type="method" value="EM"/>
    <property type="resolution" value="3.30 A"/>
    <property type="chains" value="J=1-146"/>
</dbReference>
<dbReference type="PDB" id="8CBJ">
    <property type="method" value="EM"/>
    <property type="resolution" value="3.80 A"/>
    <property type="chains" value="S=1-146"/>
</dbReference>
<dbReference type="PDB" id="8CCS">
    <property type="method" value="EM"/>
    <property type="resolution" value="1.97 A"/>
    <property type="chains" value="u=1-146"/>
</dbReference>
<dbReference type="PDB" id="8CDL">
    <property type="method" value="EM"/>
    <property type="resolution" value="2.72 A"/>
    <property type="chains" value="u=1-146"/>
</dbReference>
<dbReference type="PDB" id="8CDR">
    <property type="method" value="EM"/>
    <property type="resolution" value="2.04 A"/>
    <property type="chains" value="u=1-146"/>
</dbReference>
<dbReference type="PDB" id="8CEH">
    <property type="method" value="EM"/>
    <property type="resolution" value="2.05 A"/>
    <property type="chains" value="u=1-146"/>
</dbReference>
<dbReference type="PDB" id="8CF5">
    <property type="method" value="EM"/>
    <property type="resolution" value="2.71 A"/>
    <property type="chains" value="u=1-146"/>
</dbReference>
<dbReference type="PDB" id="8CG8">
    <property type="method" value="EM"/>
    <property type="resolution" value="2.57 A"/>
    <property type="chains" value="u=1-146"/>
</dbReference>
<dbReference type="PDB" id="8CGN">
    <property type="method" value="EM"/>
    <property type="resolution" value="2.28 A"/>
    <property type="chains" value="u=1-146"/>
</dbReference>
<dbReference type="PDB" id="8CIV">
    <property type="method" value="EM"/>
    <property type="resolution" value="2.47 A"/>
    <property type="chains" value="u=1-146"/>
</dbReference>
<dbReference type="PDB" id="8CKU">
    <property type="method" value="EM"/>
    <property type="resolution" value="3.11 A"/>
    <property type="chains" value="u=1-146"/>
</dbReference>
<dbReference type="PDB" id="8CMJ">
    <property type="method" value="EM"/>
    <property type="resolution" value="3.79 A"/>
    <property type="chains" value="u=1-146"/>
</dbReference>
<dbReference type="PDB" id="8EUB">
    <property type="method" value="EM"/>
    <property type="resolution" value="2.52 A"/>
    <property type="chains" value="BS=1-146"/>
</dbReference>
<dbReference type="PDB" id="8EVP">
    <property type="method" value="EM"/>
    <property type="resolution" value="2.38 A"/>
    <property type="chains" value="BS=1-146"/>
</dbReference>
<dbReference type="PDB" id="8EVQ">
    <property type="method" value="EM"/>
    <property type="resolution" value="2.72 A"/>
    <property type="chains" value="BS=1-146"/>
</dbReference>
<dbReference type="PDB" id="8EVR">
    <property type="method" value="EM"/>
    <property type="resolution" value="2.87 A"/>
    <property type="chains" value="BS=1-146"/>
</dbReference>
<dbReference type="PDB" id="8EVS">
    <property type="method" value="EM"/>
    <property type="resolution" value="2.62 A"/>
    <property type="chains" value="BS=1-146"/>
</dbReference>
<dbReference type="PDB" id="8EVT">
    <property type="method" value="EM"/>
    <property type="resolution" value="2.20 A"/>
    <property type="chains" value="BS=1-146"/>
</dbReference>
<dbReference type="PDB" id="8EWB">
    <property type="method" value="EM"/>
    <property type="resolution" value="2.87 A"/>
    <property type="chains" value="BS=1-146"/>
</dbReference>
<dbReference type="PDB" id="8EWC">
    <property type="method" value="EM"/>
    <property type="resolution" value="2.45 A"/>
    <property type="chains" value="BS=1-146"/>
</dbReference>
<dbReference type="PDB" id="8K2D">
    <property type="method" value="EM"/>
    <property type="resolution" value="3.20 A"/>
    <property type="chains" value="SS=1-146"/>
</dbReference>
<dbReference type="PDB" id="8K82">
    <property type="method" value="EM"/>
    <property type="resolution" value="3.00 A"/>
    <property type="chains" value="SS=1-146"/>
</dbReference>
<dbReference type="PDB" id="8P4V">
    <property type="method" value="X-ray"/>
    <property type="resolution" value="3.16 A"/>
    <property type="chains" value="T/c8=1-146"/>
</dbReference>
<dbReference type="PDB" id="8P9A">
    <property type="method" value="X-ray"/>
    <property type="resolution" value="2.90 A"/>
    <property type="chains" value="T/c8=1-146"/>
</dbReference>
<dbReference type="PDB" id="8T2X">
    <property type="method" value="EM"/>
    <property type="resolution" value="2.46 A"/>
    <property type="chains" value="BS=1-146"/>
</dbReference>
<dbReference type="PDB" id="8T2Y">
    <property type="method" value="EM"/>
    <property type="resolution" value="2.20 A"/>
    <property type="chains" value="BS=1-146"/>
</dbReference>
<dbReference type="PDB" id="8T2Z">
    <property type="method" value="EM"/>
    <property type="resolution" value="2.40 A"/>
    <property type="chains" value="BS=1-146"/>
</dbReference>
<dbReference type="PDB" id="8T30">
    <property type="method" value="EM"/>
    <property type="resolution" value="2.88 A"/>
    <property type="chains" value="BS=1-146"/>
</dbReference>
<dbReference type="PDB" id="8T3A">
    <property type="method" value="EM"/>
    <property type="resolution" value="2.86 A"/>
    <property type="chains" value="BS=1-146"/>
</dbReference>
<dbReference type="PDB" id="8T3B">
    <property type="method" value="EM"/>
    <property type="resolution" value="3.08 A"/>
    <property type="chains" value="BS=1-146"/>
</dbReference>
<dbReference type="PDB" id="8T3C">
    <property type="method" value="EM"/>
    <property type="resolution" value="3.86 A"/>
    <property type="chains" value="BS=1-146"/>
</dbReference>
<dbReference type="PDB" id="8T3D">
    <property type="method" value="EM"/>
    <property type="resolution" value="2.95 A"/>
    <property type="chains" value="BS=1-146"/>
</dbReference>
<dbReference type="PDB" id="8T3E">
    <property type="method" value="EM"/>
    <property type="resolution" value="3.04 A"/>
    <property type="chains" value="BS=1-146"/>
</dbReference>
<dbReference type="PDB" id="8T3F">
    <property type="method" value="EM"/>
    <property type="resolution" value="3.09 A"/>
    <property type="chains" value="BS=1-146"/>
</dbReference>
<dbReference type="PDB" id="8UT0">
    <property type="method" value="EM"/>
    <property type="resolution" value="3.22 A"/>
    <property type="chains" value="SH=2-146"/>
</dbReference>
<dbReference type="PDB" id="8UTI">
    <property type="method" value="EM"/>
    <property type="resolution" value="3.13 A"/>
    <property type="chains" value="SH=2-146"/>
</dbReference>
<dbReference type="PDB" id="8XU8">
    <property type="method" value="EM"/>
    <property type="resolution" value="3.40 A"/>
    <property type="chains" value="SH=2-146"/>
</dbReference>
<dbReference type="PDB" id="8YLD">
    <property type="method" value="EM"/>
    <property type="resolution" value="3.90 A"/>
    <property type="chains" value="SH=2-146"/>
</dbReference>
<dbReference type="PDB" id="8YLR">
    <property type="method" value="EM"/>
    <property type="resolution" value="3.90 A"/>
    <property type="chains" value="SH=2-146"/>
</dbReference>
<dbReference type="PDB" id="8Z70">
    <property type="method" value="EM"/>
    <property type="resolution" value="3.20 A"/>
    <property type="chains" value="SH=2-146"/>
</dbReference>
<dbReference type="PDB" id="8Z71">
    <property type="method" value="EM"/>
    <property type="resolution" value="3.60 A"/>
    <property type="chains" value="SH=2-146"/>
</dbReference>
<dbReference type="PDB" id="9F9S">
    <property type="method" value="EM"/>
    <property type="resolution" value="2.90 A"/>
    <property type="chains" value="Rs/Ss=1-146"/>
</dbReference>
<dbReference type="PDBsum" id="3J6X"/>
<dbReference type="PDBsum" id="3J6Y"/>
<dbReference type="PDBsum" id="3J77"/>
<dbReference type="PDBsum" id="3J78"/>
<dbReference type="PDBsum" id="4U3M"/>
<dbReference type="PDBsum" id="4U3N"/>
<dbReference type="PDBsum" id="4U3U"/>
<dbReference type="PDBsum" id="4U4N"/>
<dbReference type="PDBsum" id="4U4O"/>
<dbReference type="PDBsum" id="4U4Q"/>
<dbReference type="PDBsum" id="4U4R"/>
<dbReference type="PDBsum" id="4U4U"/>
<dbReference type="PDBsum" id="4U4Y"/>
<dbReference type="PDBsum" id="4U4Z"/>
<dbReference type="PDBsum" id="4U50"/>
<dbReference type="PDBsum" id="4U51"/>
<dbReference type="PDBsum" id="4U52"/>
<dbReference type="PDBsum" id="4U53"/>
<dbReference type="PDBsum" id="4U55"/>
<dbReference type="PDBsum" id="4U56"/>
<dbReference type="PDBsum" id="4U6F"/>
<dbReference type="PDBsum" id="4V4B"/>
<dbReference type="PDBsum" id="4V5Z"/>
<dbReference type="PDBsum" id="4V6I"/>
<dbReference type="PDBsum" id="4V7R"/>
<dbReference type="PDBsum" id="4V88"/>
<dbReference type="PDBsum" id="4V8Y"/>
<dbReference type="PDBsum" id="4V8Z"/>
<dbReference type="PDBsum" id="4V92"/>
<dbReference type="PDBsum" id="5DAT"/>
<dbReference type="PDBsum" id="5DC3"/>
<dbReference type="PDBsum" id="5DGE"/>
<dbReference type="PDBsum" id="5DGF"/>
<dbReference type="PDBsum" id="5DGV"/>
<dbReference type="PDBsum" id="5FCI"/>
<dbReference type="PDBsum" id="5FCJ"/>
<dbReference type="PDBsum" id="5I4L"/>
<dbReference type="PDBsum" id="5JUO"/>
<dbReference type="PDBsum" id="5JUP"/>
<dbReference type="PDBsum" id="5JUS"/>
<dbReference type="PDBsum" id="5JUT"/>
<dbReference type="PDBsum" id="5JUU"/>
<dbReference type="PDBsum" id="5LYB"/>
<dbReference type="PDBsum" id="5M1J"/>
<dbReference type="PDBsum" id="5MC6"/>
<dbReference type="PDBsum" id="5MEI"/>
<dbReference type="PDBsum" id="5NDG"/>
<dbReference type="PDBsum" id="5NDV"/>
<dbReference type="PDBsum" id="5NDW"/>
<dbReference type="PDBsum" id="5OBM"/>
<dbReference type="PDBsum" id="5ON6"/>
<dbReference type="PDBsum" id="5TBW"/>
<dbReference type="PDBsum" id="5TGA"/>
<dbReference type="PDBsum" id="5TGM"/>
<dbReference type="PDBsum" id="5WLC"/>
<dbReference type="PDBsum" id="6EML"/>
<dbReference type="PDBsum" id="6FAI"/>
<dbReference type="PDBsum" id="6GQ1"/>
<dbReference type="PDBsum" id="6GQB"/>
<dbReference type="PDBsum" id="6GQV"/>
<dbReference type="PDBsum" id="6HHQ"/>
<dbReference type="PDBsum" id="6I7O"/>
<dbReference type="PDBsum" id="6KE6"/>
<dbReference type="PDBsum" id="6LQP"/>
<dbReference type="PDBsum" id="6LQU"/>
<dbReference type="PDBsum" id="6Q8Y"/>
<dbReference type="PDBsum" id="6RBD"/>
<dbReference type="PDBsum" id="6RBE"/>
<dbReference type="PDBsum" id="6S47"/>
<dbReference type="PDBsum" id="6SNT"/>
<dbReference type="PDBsum" id="6SV4"/>
<dbReference type="PDBsum" id="6T4Q"/>
<dbReference type="PDBsum" id="6T7I"/>
<dbReference type="PDBsum" id="6T7T"/>
<dbReference type="PDBsum" id="6T83"/>
<dbReference type="PDBsum" id="6TB3"/>
<dbReference type="PDBsum" id="6TNU"/>
<dbReference type="PDBsum" id="6WDR"/>
<dbReference type="PDBsum" id="6WOO"/>
<dbReference type="PDBsum" id="6XIQ"/>
<dbReference type="PDBsum" id="6XIR"/>
<dbReference type="PDBsum" id="6Y7C"/>
<dbReference type="PDBsum" id="6Z6J"/>
<dbReference type="PDBsum" id="6Z6K"/>
<dbReference type="PDBsum" id="6ZCE"/>
<dbReference type="PDBsum" id="6ZQA"/>
<dbReference type="PDBsum" id="6ZQB"/>
<dbReference type="PDBsum" id="6ZQC"/>
<dbReference type="PDBsum" id="6ZQD"/>
<dbReference type="PDBsum" id="6ZQE"/>
<dbReference type="PDBsum" id="6ZQF"/>
<dbReference type="PDBsum" id="6ZQG"/>
<dbReference type="PDBsum" id="6ZU9"/>
<dbReference type="PDBsum" id="6ZVI"/>
<dbReference type="PDBsum" id="7A1G"/>
<dbReference type="PDBsum" id="7AJT"/>
<dbReference type="PDBsum" id="7AJU"/>
<dbReference type="PDBsum" id="7B7D"/>
<dbReference type="PDBsum" id="7D4I"/>
<dbReference type="PDBsum" id="7D5S"/>
<dbReference type="PDBsum" id="7D63"/>
<dbReference type="PDBsum" id="7MPI"/>
<dbReference type="PDBsum" id="7MPJ"/>
<dbReference type="PDBsum" id="7N8B"/>
<dbReference type="PDBsum" id="7NRC"/>
<dbReference type="PDBsum" id="7NRD"/>
<dbReference type="PDBsum" id="7SUK"/>
<dbReference type="PDBsum" id="7ZPQ"/>
<dbReference type="PDBsum" id="7ZRS"/>
<dbReference type="PDBsum" id="7ZUW"/>
<dbReference type="PDBsum" id="7ZUX"/>
<dbReference type="PDBsum" id="7ZW0"/>
<dbReference type="PDBsum" id="8BN3"/>
<dbReference type="PDBsum" id="8BQD"/>
<dbReference type="PDBsum" id="8BQX"/>
<dbReference type="PDBsum" id="8C00"/>
<dbReference type="PDBsum" id="8C01"/>
<dbReference type="PDBsum" id="8CAH"/>
<dbReference type="PDBsum" id="8CAS"/>
<dbReference type="PDBsum" id="8CBJ"/>
<dbReference type="PDBsum" id="8CCS"/>
<dbReference type="PDBsum" id="8CDL"/>
<dbReference type="PDBsum" id="8CDR"/>
<dbReference type="PDBsum" id="8CEH"/>
<dbReference type="PDBsum" id="8CF5"/>
<dbReference type="PDBsum" id="8CG8"/>
<dbReference type="PDBsum" id="8CGN"/>
<dbReference type="PDBsum" id="8CIV"/>
<dbReference type="PDBsum" id="8CKU"/>
<dbReference type="PDBsum" id="8CMJ"/>
<dbReference type="PDBsum" id="8EUB"/>
<dbReference type="PDBsum" id="8EVP"/>
<dbReference type="PDBsum" id="8EVQ"/>
<dbReference type="PDBsum" id="8EVR"/>
<dbReference type="PDBsum" id="8EVS"/>
<dbReference type="PDBsum" id="8EVT"/>
<dbReference type="PDBsum" id="8EWB"/>
<dbReference type="PDBsum" id="8EWC"/>
<dbReference type="PDBsum" id="8K2D"/>
<dbReference type="PDBsum" id="8K82"/>
<dbReference type="PDBsum" id="8P4V"/>
<dbReference type="PDBsum" id="8P9A"/>
<dbReference type="PDBsum" id="8T2X"/>
<dbReference type="PDBsum" id="8T2Y"/>
<dbReference type="PDBsum" id="8T2Z"/>
<dbReference type="PDBsum" id="8T30"/>
<dbReference type="PDBsum" id="8T3A"/>
<dbReference type="PDBsum" id="8T3B"/>
<dbReference type="PDBsum" id="8T3C"/>
<dbReference type="PDBsum" id="8T3D"/>
<dbReference type="PDBsum" id="8T3E"/>
<dbReference type="PDBsum" id="8T3F"/>
<dbReference type="PDBsum" id="8UT0"/>
<dbReference type="PDBsum" id="8UTI"/>
<dbReference type="PDBsum" id="8XU8"/>
<dbReference type="PDBsum" id="8YLD"/>
<dbReference type="PDBsum" id="8YLR"/>
<dbReference type="PDBsum" id="8Z70"/>
<dbReference type="PDBsum" id="8Z71"/>
<dbReference type="PDBsum" id="9F9S"/>
<dbReference type="EMDB" id="EMD-0949"/>
<dbReference type="EMDB" id="EMD-0954"/>
<dbReference type="EMDB" id="EMD-10315"/>
<dbReference type="EMDB" id="EMD-10377"/>
<dbReference type="EMDB" id="EMD-10396"/>
<dbReference type="EMDB" id="EMD-10397"/>
<dbReference type="EMDB" id="EMD-10398"/>
<dbReference type="EMDB" id="EMD-10431"/>
<dbReference type="EMDB" id="EMD-10537"/>
<dbReference type="EMDB" id="EMD-10713"/>
<dbReference type="EMDB" id="EMD-11096"/>
<dbReference type="EMDB" id="EMD-11097"/>
<dbReference type="EMDB" id="EMD-11357"/>
<dbReference type="EMDB" id="EMD-11358"/>
<dbReference type="EMDB" id="EMD-11359"/>
<dbReference type="EMDB" id="EMD-11360"/>
<dbReference type="EMDB" id="EMD-11361"/>
<dbReference type="EMDB" id="EMD-11362"/>
<dbReference type="EMDB" id="EMD-11363"/>
<dbReference type="EMDB" id="EMD-11439"/>
<dbReference type="EMDB" id="EMD-11457"/>
<dbReference type="EMDB" id="EMD-11608"/>
<dbReference type="EMDB" id="EMD-11807"/>
<dbReference type="EMDB" id="EMD-11808"/>
<dbReference type="EMDB" id="EMD-14861"/>
<dbReference type="EMDB" id="EMD-14921"/>
<dbReference type="EMDB" id="EMD-14978"/>
<dbReference type="EMDB" id="EMD-14979"/>
<dbReference type="EMDB" id="EMD-14990"/>
<dbReference type="EMDB" id="EMD-16127"/>
<dbReference type="EMDB" id="EMD-16182"/>
<dbReference type="EMDB" id="EMD-16347"/>
<dbReference type="EMDB" id="EMD-16349"/>
<dbReference type="EMDB" id="EMD-16533"/>
<dbReference type="EMDB" id="EMD-16541"/>
<dbReference type="EMDB" id="EMD-16563"/>
<dbReference type="EMDB" id="EMD-16591"/>
<dbReference type="EMDB" id="EMD-16594"/>
<dbReference type="EMDB" id="EMD-16609"/>
<dbReference type="EMDB" id="EMD-16616"/>
<dbReference type="EMDB" id="EMD-16634"/>
<dbReference type="EMDB" id="EMD-16648"/>
<dbReference type="EMDB" id="EMD-16684"/>
<dbReference type="EMDB" id="EMD-16702"/>
<dbReference type="EMDB" id="EMD-16729"/>
<dbReference type="EMDB" id="EMD-21644"/>
<dbReference type="EMDB" id="EMD-21859"/>
<dbReference type="EMDB" id="EMD-22196"/>
<dbReference type="EMDB" id="EMD-22198"/>
<dbReference type="EMDB" id="EMD-23934"/>
<dbReference type="EMDB" id="EMD-23935"/>
<dbReference type="EMDB" id="EMD-24235"/>
<dbReference type="EMDB" id="EMD-28610"/>
<dbReference type="EMDB" id="EMD-28632"/>
<dbReference type="EMDB" id="EMD-28633"/>
<dbReference type="EMDB" id="EMD-28634"/>
<dbReference type="EMDB" id="EMD-28635"/>
<dbReference type="EMDB" id="EMD-28636"/>
<dbReference type="EMDB" id="EMD-28642"/>
<dbReference type="EMDB" id="EMD-28643"/>
<dbReference type="EMDB" id="EMD-30574"/>
<dbReference type="EMDB" id="EMD-30584"/>
<dbReference type="EMDB" id="EMD-30588"/>
<dbReference type="EMDB" id="EMD-36839"/>
<dbReference type="EMDB" id="EMD-36945"/>
<dbReference type="EMDB" id="EMD-38660"/>
<dbReference type="EMDB" id="EMD-40990"/>
<dbReference type="EMDB" id="EMD-40991"/>
<dbReference type="EMDB" id="EMD-40992"/>
<dbReference type="EMDB" id="EMD-40993"/>
<dbReference type="EMDB" id="EMD-40997"/>
<dbReference type="EMDB" id="EMD-40998"/>
<dbReference type="EMDB" id="EMD-40999"/>
<dbReference type="EMDB" id="EMD-41000"/>
<dbReference type="EMDB" id="EMD-41001"/>
<dbReference type="EMDB" id="EMD-41002"/>
<dbReference type="EMDB" id="EMD-4140"/>
<dbReference type="EMDB" id="EMD-4214"/>
<dbReference type="EMDB" id="EMD-42525"/>
<dbReference type="EMDB" id="EMD-42540"/>
<dbReference type="EMDB" id="EMD-4427"/>
<dbReference type="EMDB" id="EMD-4474"/>
<dbReference type="EMDB" id="EMD-4792"/>
<dbReference type="EMDB" id="EMD-4793"/>
<dbReference type="EMDB" id="EMD-50259"/>
<dbReference type="EMDB" id="EMD-8859"/>
<dbReference type="EMDB" id="EMD-9964"/>
<dbReference type="SMR" id="P0CX55"/>
<dbReference type="BioGRID" id="32505">
    <property type="interactions" value="685"/>
</dbReference>
<dbReference type="BioGRID" id="35143">
    <property type="interactions" value="239"/>
</dbReference>
<dbReference type="ComplexPortal" id="CPX-1599">
    <property type="entry name" value="40S cytosolic small ribosomal subunit"/>
</dbReference>
<dbReference type="FunCoup" id="P0CX55">
    <property type="interactions" value="1178"/>
</dbReference>
<dbReference type="IntAct" id="P0CX55">
    <property type="interactions" value="9"/>
</dbReference>
<dbReference type="MINT" id="P0CX55"/>
<dbReference type="STRING" id="4932.YDR450W"/>
<dbReference type="CarbonylDB" id="P0CX55"/>
<dbReference type="iPTMnet" id="P0CX55"/>
<dbReference type="PaxDb" id="4932-YDR450W"/>
<dbReference type="PeptideAtlas" id="P0CX55"/>
<dbReference type="TopDownProteomics" id="P0CX55"/>
<dbReference type="EnsemblFungi" id="YDR450W_mRNA">
    <property type="protein sequence ID" value="YDR450W"/>
    <property type="gene ID" value="YDR450W"/>
</dbReference>
<dbReference type="EnsemblFungi" id="YML026C_mRNA">
    <property type="protein sequence ID" value="YML026C"/>
    <property type="gene ID" value="YML026C"/>
</dbReference>
<dbReference type="GeneID" id="852061"/>
<dbReference type="KEGG" id="sce:YDR450W"/>
<dbReference type="KEGG" id="sce:YML026C"/>
<dbReference type="AGR" id="SGD:S000002858"/>
<dbReference type="SGD" id="S000002858">
    <property type="gene designation" value="RPS18A"/>
</dbReference>
<dbReference type="VEuPathDB" id="FungiDB:YDR450W"/>
<dbReference type="VEuPathDB" id="FungiDB:YML026C"/>
<dbReference type="eggNOG" id="KOG3311">
    <property type="taxonomic scope" value="Eukaryota"/>
</dbReference>
<dbReference type="HOGENOM" id="CLU_103849_0_1_1"/>
<dbReference type="InParanoid" id="P0CX55"/>
<dbReference type="OMA" id="SYKGVRH"/>
<dbReference type="OrthoDB" id="1702480at2759"/>
<dbReference type="BioCyc" id="YEAST:G3O-29981-MONOMER"/>
<dbReference type="Reactome" id="R-SCE-156827">
    <property type="pathway name" value="L13a-mediated translational silencing of Ceruloplasmin expression"/>
</dbReference>
<dbReference type="Reactome" id="R-SCE-1799339">
    <property type="pathway name" value="SRP-dependent cotranslational protein targeting to membrane"/>
</dbReference>
<dbReference type="Reactome" id="R-SCE-72649">
    <property type="pathway name" value="Translation initiation complex formation"/>
</dbReference>
<dbReference type="Reactome" id="R-SCE-72689">
    <property type="pathway name" value="Formation of a pool of free 40S subunits"/>
</dbReference>
<dbReference type="Reactome" id="R-SCE-72695">
    <property type="pathway name" value="Formation of the ternary complex, and subsequently, the 43S complex"/>
</dbReference>
<dbReference type="Reactome" id="R-SCE-72702">
    <property type="pathway name" value="Ribosomal scanning and start codon recognition"/>
</dbReference>
<dbReference type="Reactome" id="R-SCE-72706">
    <property type="pathway name" value="GTP hydrolysis and joining of the 60S ribosomal subunit"/>
</dbReference>
<dbReference type="Reactome" id="R-SCE-975956">
    <property type="pathway name" value="Nonsense Mediated Decay (NMD) independent of the Exon Junction Complex (EJC)"/>
</dbReference>
<dbReference type="Reactome" id="R-SCE-975957">
    <property type="pathway name" value="Nonsense Mediated Decay (NMD) enhanced by the Exon Junction Complex (EJC)"/>
</dbReference>
<dbReference type="BioGRID-ORCS" id="852061">
    <property type="hits" value="2 hits in 10 CRISPR screens"/>
</dbReference>
<dbReference type="BioGRID-ORCS" id="854982">
    <property type="hits" value="6 hits in 10 CRISPR screens"/>
</dbReference>
<dbReference type="PRO" id="PR:P0CX55"/>
<dbReference type="Proteomes" id="UP000002311">
    <property type="component" value="Chromosome IV"/>
</dbReference>
<dbReference type="RNAct" id="P0CX55">
    <property type="molecule type" value="protein"/>
</dbReference>
<dbReference type="ExpressionAtlas" id="P0CX55">
    <property type="expression patterns" value="baseline and differential"/>
</dbReference>
<dbReference type="GO" id="GO:0005737">
    <property type="term" value="C:cytoplasm"/>
    <property type="evidence" value="ECO:0007005"/>
    <property type="project" value="SGD"/>
</dbReference>
<dbReference type="GO" id="GO:0005829">
    <property type="term" value="C:cytosol"/>
    <property type="evidence" value="ECO:0000318"/>
    <property type="project" value="GO_Central"/>
</dbReference>
<dbReference type="GO" id="GO:0022627">
    <property type="term" value="C:cytosolic small ribosomal subunit"/>
    <property type="evidence" value="ECO:0000303"/>
    <property type="project" value="SGD"/>
</dbReference>
<dbReference type="GO" id="GO:0005739">
    <property type="term" value="C:mitochondrion"/>
    <property type="evidence" value="ECO:0007005"/>
    <property type="project" value="SGD"/>
</dbReference>
<dbReference type="GO" id="GO:0015935">
    <property type="term" value="C:small ribosomal subunit"/>
    <property type="evidence" value="ECO:0000318"/>
    <property type="project" value="GO_Central"/>
</dbReference>
<dbReference type="GO" id="GO:0019843">
    <property type="term" value="F:rRNA binding"/>
    <property type="evidence" value="ECO:0007669"/>
    <property type="project" value="UniProtKB-KW"/>
</dbReference>
<dbReference type="GO" id="GO:0003735">
    <property type="term" value="F:structural constituent of ribosome"/>
    <property type="evidence" value="ECO:0000303"/>
    <property type="project" value="SGD"/>
</dbReference>
<dbReference type="GO" id="GO:0002181">
    <property type="term" value="P:cytoplasmic translation"/>
    <property type="evidence" value="ECO:0000303"/>
    <property type="project" value="SGD"/>
</dbReference>
<dbReference type="GO" id="GO:0000447">
    <property type="term" value="P:endonucleolytic cleavage in ITS1 to separate SSU-rRNA from 5.8S rRNA and LSU-rRNA from tricistronic rRNA transcript (SSU-rRNA, 5.8S rRNA, LSU-rRNA)"/>
    <property type="evidence" value="ECO:0000315"/>
    <property type="project" value="SGD"/>
</dbReference>
<dbReference type="GO" id="GO:0000054">
    <property type="term" value="P:ribosomal subunit export from nucleus"/>
    <property type="evidence" value="ECO:0000316"/>
    <property type="project" value="SGD"/>
</dbReference>
<dbReference type="FunFam" id="1.10.8.50:FF:000002">
    <property type="entry name" value="40S ribosomal protein S18"/>
    <property type="match status" value="1"/>
</dbReference>
<dbReference type="FunFam" id="4.10.910.10:FF:000002">
    <property type="entry name" value="40S ribosomal protein S18"/>
    <property type="match status" value="1"/>
</dbReference>
<dbReference type="Gene3D" id="1.10.8.50">
    <property type="match status" value="1"/>
</dbReference>
<dbReference type="Gene3D" id="4.10.910.10">
    <property type="entry name" value="30s ribosomal protein s13, domain 2"/>
    <property type="match status" value="1"/>
</dbReference>
<dbReference type="HAMAP" id="MF_01315">
    <property type="entry name" value="Ribosomal_uS13"/>
    <property type="match status" value="1"/>
</dbReference>
<dbReference type="InterPro" id="IPR027437">
    <property type="entry name" value="Rbsml_uS13_C"/>
</dbReference>
<dbReference type="InterPro" id="IPR001892">
    <property type="entry name" value="Ribosomal_uS13"/>
</dbReference>
<dbReference type="InterPro" id="IPR010979">
    <property type="entry name" value="Ribosomal_uS13-like_H2TH"/>
</dbReference>
<dbReference type="InterPro" id="IPR018269">
    <property type="entry name" value="Ribosomal_uS13_CS"/>
</dbReference>
<dbReference type="PANTHER" id="PTHR10871">
    <property type="entry name" value="30S RIBOSOMAL PROTEIN S13/40S RIBOSOMAL PROTEIN S18"/>
    <property type="match status" value="1"/>
</dbReference>
<dbReference type="PANTHER" id="PTHR10871:SF3">
    <property type="entry name" value="SMALL RIBOSOMAL SUBUNIT PROTEIN US13"/>
    <property type="match status" value="1"/>
</dbReference>
<dbReference type="Pfam" id="PF00416">
    <property type="entry name" value="Ribosomal_S13"/>
    <property type="match status" value="1"/>
</dbReference>
<dbReference type="PIRSF" id="PIRSF002134">
    <property type="entry name" value="Ribosomal_S13"/>
    <property type="match status" value="1"/>
</dbReference>
<dbReference type="SUPFAM" id="SSF46946">
    <property type="entry name" value="S13-like H2TH domain"/>
    <property type="match status" value="1"/>
</dbReference>
<dbReference type="PROSITE" id="PS00646">
    <property type="entry name" value="RIBOSOMAL_S13_1"/>
    <property type="match status" value="1"/>
</dbReference>
<dbReference type="PROSITE" id="PS50159">
    <property type="entry name" value="RIBOSOMAL_S13_2"/>
    <property type="match status" value="1"/>
</dbReference>
<gene>
    <name evidence="8" type="primary">RPS18A</name>
    <name type="ordered locus">YDR450W</name>
    <name type="ORF">D9461.35</name>
</gene>
<comment type="function">
    <text evidence="10">Component of the ribosome, a large ribonucleoprotein complex responsible for the synthesis of proteins in the cell. The small ribosomal subunit (SSU) binds messenger RNAs (mRNAs) and translates the encoded message by selecting cognate aminoacyl-transfer RNA (tRNA) molecules. The large subunit (LSU) contains the ribosomal catalytic site termed the peptidyl transferase center (PTC), which catalyzes the formation of peptide bonds, thereby polymerizing the amino acids delivered by tRNAs into a polypeptide chain. The nascent polypeptides leave the ribosome through a tunnel in the LSU and interact with protein factors that function in enzymatic processing, targeting, and the membrane insertion of nascent chains at the exit of the ribosomal tunnel.</text>
</comment>
<comment type="subunit">
    <text evidence="4 11">Component of the small ribosomal subunit (SSU). Mature yeast ribosomes consist of a small (40S) and a large (60S) subunit. The 40S small subunit contains 1 molecule of ribosomal RNA (18S rRNA) and 33 different proteins (encoded by 57 genes). The large 60S subunit contains 3 rRNA molecules (25S, 5.8S and 5S rRNA) and 46 different proteins (encoded by 81 genes) (PubMed:22096102, PubMed:9559554).</text>
</comment>
<comment type="subcellular location">
    <subcellularLocation>
        <location evidence="2 4">Cytoplasm</location>
    </subcellularLocation>
</comment>
<comment type="PTM">
    <text evidence="1 6">N-terminally acetylated by acetyltransferase NatA.</text>
</comment>
<comment type="miscellaneous">
    <text evidence="3">Present with 48100 molecules/cell in log phase SD medium.</text>
</comment>
<comment type="miscellaneous">
    <text evidence="9">There are 2 genes for uS13 in yeast.</text>
</comment>
<comment type="similarity">
    <text evidence="9">Belongs to the universal ribosomal protein uS13 family.</text>
</comment>
<proteinExistence type="evidence at protein level"/>
<sequence>MSLVVQEQGSFQHILRLLNTNVDGNIKIVYALTTIKGVGRRYSNLVCKKADVDLHKRAGELTQEELERIVQIMQNPTHYKIPAWFLNRQNDITDGKDYHTLANNVESKLRDDLERLKKIRAHRGIRHFWGLRVRGQHTKTTGRRRA</sequence>
<protein>
    <recommendedName>
        <fullName evidence="7">Small ribosomal subunit protein uS13A</fullName>
    </recommendedName>
    <alternativeName>
        <fullName evidence="8">40S ribosomal protein S18-A</fullName>
    </alternativeName>
</protein>
<name>RS18A_YEAST</name>
<feature type="initiator methionine" description="Removed" evidence="1 6 13">
    <location>
        <position position="1"/>
    </location>
</feature>
<feature type="chain" id="PRO_0000132227" description="Small ribosomal subunit protein uS13A">
    <location>
        <begin position="2"/>
        <end position="146"/>
    </location>
</feature>
<feature type="modified residue" description="N-acetylserine" evidence="1 6 13">
    <location>
        <position position="2"/>
    </location>
</feature>
<feature type="modified residue" description="N6-methyllysine; by RKM1" evidence="5">
    <location>
        <position position="48"/>
    </location>
</feature>
<feature type="cross-link" description="Glycyl lysine isopeptide (Lys-Gly) (interchain with G-Cter in ubiquitin)" evidence="12">
    <location>
        <position position="36"/>
    </location>
</feature>
<feature type="cross-link" description="Glycyl lysine isopeptide (Lys-Gly) (interchain with G-Cter in ubiquitin)" evidence="12">
    <location>
        <position position="49"/>
    </location>
</feature>
<feature type="cross-link" description="Glycyl lysine isopeptide (Lys-Gly) (interchain with G-Cter in ubiquitin)" evidence="12">
    <location>
        <position position="80"/>
    </location>
</feature>
<feature type="cross-link" description="Glycyl lysine isopeptide (Lys-Gly) (interchain with G-Cter in ubiquitin)" evidence="12">
    <location>
        <position position="96"/>
    </location>
</feature>
<feature type="strand" evidence="17">
    <location>
        <begin position="13"/>
        <end position="17"/>
    </location>
</feature>
<feature type="strand" evidence="17">
    <location>
        <begin position="20"/>
        <end position="23"/>
    </location>
</feature>
<feature type="strand" evidence="15">
    <location>
        <begin position="25"/>
        <end position="27"/>
    </location>
</feature>
<feature type="helix" evidence="17">
    <location>
        <begin position="28"/>
        <end position="31"/>
    </location>
</feature>
<feature type="helix" evidence="17">
    <location>
        <begin position="32"/>
        <end position="34"/>
    </location>
</feature>
<feature type="helix" evidence="17">
    <location>
        <begin position="40"/>
        <end position="49"/>
    </location>
</feature>
<feature type="helix" evidence="17">
    <location>
        <begin position="58"/>
        <end position="60"/>
    </location>
</feature>
<feature type="helix" evidence="17">
    <location>
        <begin position="63"/>
        <end position="73"/>
    </location>
</feature>
<feature type="helix" evidence="17">
    <location>
        <begin position="76"/>
        <end position="79"/>
    </location>
</feature>
<feature type="strand" evidence="18">
    <location>
        <begin position="83"/>
        <end position="85"/>
    </location>
</feature>
<feature type="strand" evidence="16">
    <location>
        <begin position="86"/>
        <end position="88"/>
    </location>
</feature>
<feature type="strand" evidence="17">
    <location>
        <begin position="92"/>
        <end position="95"/>
    </location>
</feature>
<feature type="helix" evidence="17">
    <location>
        <begin position="102"/>
        <end position="104"/>
    </location>
</feature>
<feature type="turn" evidence="17">
    <location>
        <begin position="105"/>
        <end position="107"/>
    </location>
</feature>
<feature type="turn" evidence="17">
    <location>
        <begin position="109"/>
        <end position="111"/>
    </location>
</feature>
<feature type="helix" evidence="17">
    <location>
        <begin position="112"/>
        <end position="118"/>
    </location>
</feature>
<feature type="helix" evidence="17">
    <location>
        <begin position="122"/>
        <end position="130"/>
    </location>
</feature>
<feature type="strand" evidence="14">
    <location>
        <begin position="139"/>
        <end position="141"/>
    </location>
</feature>
<reference key="1">
    <citation type="journal article" date="1997" name="Nature">
        <title>The nucleotide sequence of Saccharomyces cerevisiae chromosome IV.</title>
        <authorList>
            <person name="Jacq C."/>
            <person name="Alt-Moerbe J."/>
            <person name="Andre B."/>
            <person name="Arnold W."/>
            <person name="Bahr A."/>
            <person name="Ballesta J.P.G."/>
            <person name="Bargues M."/>
            <person name="Baron L."/>
            <person name="Becker A."/>
            <person name="Biteau N."/>
            <person name="Bloecker H."/>
            <person name="Blugeon C."/>
            <person name="Boskovic J."/>
            <person name="Brandt P."/>
            <person name="Brueckner M."/>
            <person name="Buitrago M.J."/>
            <person name="Coster F."/>
            <person name="Delaveau T."/>
            <person name="del Rey F."/>
            <person name="Dujon B."/>
            <person name="Eide L.G."/>
            <person name="Garcia-Cantalejo J.M."/>
            <person name="Goffeau A."/>
            <person name="Gomez-Peris A."/>
            <person name="Granotier C."/>
            <person name="Hanemann V."/>
            <person name="Hankeln T."/>
            <person name="Hoheisel J.D."/>
            <person name="Jaeger W."/>
            <person name="Jimenez A."/>
            <person name="Jonniaux J.-L."/>
            <person name="Kraemer C."/>
            <person name="Kuester H."/>
            <person name="Laamanen P."/>
            <person name="Legros Y."/>
            <person name="Louis E.J."/>
            <person name="Moeller-Rieker S."/>
            <person name="Monnet A."/>
            <person name="Moro M."/>
            <person name="Mueller-Auer S."/>
            <person name="Nussbaumer B."/>
            <person name="Paricio N."/>
            <person name="Paulin L."/>
            <person name="Perea J."/>
            <person name="Perez-Alonso M."/>
            <person name="Perez-Ortin J.E."/>
            <person name="Pohl T.M."/>
            <person name="Prydz H."/>
            <person name="Purnelle B."/>
            <person name="Rasmussen S.W."/>
            <person name="Remacha M.A."/>
            <person name="Revuelta J.L."/>
            <person name="Rieger M."/>
            <person name="Salom D."/>
            <person name="Saluz H.P."/>
            <person name="Saiz J.E."/>
            <person name="Saren A.-M."/>
            <person name="Schaefer M."/>
            <person name="Scharfe M."/>
            <person name="Schmidt E.R."/>
            <person name="Schneider C."/>
            <person name="Scholler P."/>
            <person name="Schwarz S."/>
            <person name="Soler-Mira A."/>
            <person name="Urrestarazu L.A."/>
            <person name="Verhasselt P."/>
            <person name="Vissers S."/>
            <person name="Voet M."/>
            <person name="Volckaert G."/>
            <person name="Wagner G."/>
            <person name="Wambutt R."/>
            <person name="Wedler E."/>
            <person name="Wedler H."/>
            <person name="Woelfl S."/>
            <person name="Harris D.E."/>
            <person name="Bowman S."/>
            <person name="Brown D."/>
            <person name="Churcher C.M."/>
            <person name="Connor R."/>
            <person name="Dedman K."/>
            <person name="Gentles S."/>
            <person name="Hamlin N."/>
            <person name="Hunt S."/>
            <person name="Jones L."/>
            <person name="McDonald S."/>
            <person name="Murphy L.D."/>
            <person name="Niblett D."/>
            <person name="Odell C."/>
            <person name="Oliver K."/>
            <person name="Rajandream M.A."/>
            <person name="Richards C."/>
            <person name="Shore L."/>
            <person name="Walsh S.V."/>
            <person name="Barrell B.G."/>
            <person name="Dietrich F.S."/>
            <person name="Mulligan J.T."/>
            <person name="Allen E."/>
            <person name="Araujo R."/>
            <person name="Aviles E."/>
            <person name="Berno A."/>
            <person name="Carpenter J."/>
            <person name="Chen E."/>
            <person name="Cherry J.M."/>
            <person name="Chung E."/>
            <person name="Duncan M."/>
            <person name="Hunicke-Smith S."/>
            <person name="Hyman R.W."/>
            <person name="Komp C."/>
            <person name="Lashkari D."/>
            <person name="Lew H."/>
            <person name="Lin D."/>
            <person name="Mosedale D."/>
            <person name="Nakahara K."/>
            <person name="Namath A."/>
            <person name="Oefner P."/>
            <person name="Oh C."/>
            <person name="Petel F.X."/>
            <person name="Roberts D."/>
            <person name="Schramm S."/>
            <person name="Schroeder M."/>
            <person name="Shogren T."/>
            <person name="Shroff N."/>
            <person name="Winant A."/>
            <person name="Yelton M.A."/>
            <person name="Botstein D."/>
            <person name="Davis R.W."/>
            <person name="Johnston M."/>
            <person name="Andrews S."/>
            <person name="Brinkman R."/>
            <person name="Cooper J."/>
            <person name="Ding H."/>
            <person name="Du Z."/>
            <person name="Favello A."/>
            <person name="Fulton L."/>
            <person name="Gattung S."/>
            <person name="Greco T."/>
            <person name="Hallsworth K."/>
            <person name="Hawkins J."/>
            <person name="Hillier L.W."/>
            <person name="Jier M."/>
            <person name="Johnson D."/>
            <person name="Johnston L."/>
            <person name="Kirsten J."/>
            <person name="Kucaba T."/>
            <person name="Langston Y."/>
            <person name="Latreille P."/>
            <person name="Le T."/>
            <person name="Mardis E."/>
            <person name="Menezes S."/>
            <person name="Miller N."/>
            <person name="Nhan M."/>
            <person name="Pauley A."/>
            <person name="Peluso D."/>
            <person name="Rifkin L."/>
            <person name="Riles L."/>
            <person name="Taich A."/>
            <person name="Trevaskis E."/>
            <person name="Vignati D."/>
            <person name="Wilcox L."/>
            <person name="Wohldman P."/>
            <person name="Vaudin M."/>
            <person name="Wilson R."/>
            <person name="Waterston R."/>
            <person name="Albermann K."/>
            <person name="Hani J."/>
            <person name="Heumann K."/>
            <person name="Kleine K."/>
            <person name="Mewes H.-W."/>
            <person name="Zollner A."/>
            <person name="Zaccaria P."/>
        </authorList>
    </citation>
    <scope>NUCLEOTIDE SEQUENCE [LARGE SCALE GENOMIC DNA]</scope>
    <source>
        <strain>ATCC 204508 / S288c</strain>
    </source>
</reference>
<reference key="2">
    <citation type="journal article" date="2014" name="G3 (Bethesda)">
        <title>The reference genome sequence of Saccharomyces cerevisiae: Then and now.</title>
        <authorList>
            <person name="Engel S.R."/>
            <person name="Dietrich F.S."/>
            <person name="Fisk D.G."/>
            <person name="Binkley G."/>
            <person name="Balakrishnan R."/>
            <person name="Costanzo M.C."/>
            <person name="Dwight S.S."/>
            <person name="Hitz B.C."/>
            <person name="Karra K."/>
            <person name="Nash R.S."/>
            <person name="Weng S."/>
            <person name="Wong E.D."/>
            <person name="Lloyd P."/>
            <person name="Skrzypek M.S."/>
            <person name="Miyasato S.R."/>
            <person name="Simison M."/>
            <person name="Cherry J.M."/>
        </authorList>
    </citation>
    <scope>GENOME REANNOTATION</scope>
    <source>
        <strain>ATCC 204508 / S288c</strain>
    </source>
</reference>
<reference key="3">
    <citation type="submission" date="2005-05" db="UniProtKB">
        <authorList>
            <person name="Bienvenut W.V."/>
            <person name="Peters C."/>
        </authorList>
    </citation>
    <scope>PROTEIN SEQUENCE OF 2-36; 58-68 AND 81-88</scope>
    <scope>CLEAVAGE OF INITIATOR METHIONINE</scope>
    <scope>ACETYLATION AT SER-2</scope>
    <scope>IDENTIFICATION BY MASS SPECTROMETRY</scope>
</reference>
<reference key="4">
    <citation type="journal article" date="1998" name="Yeast">
        <title>The list of cytoplasmic ribosomal proteins of Saccharomyces cerevisiae.</title>
        <authorList>
            <person name="Planta R.J."/>
            <person name="Mager W.H."/>
        </authorList>
    </citation>
    <scope>NOMENCLATURE</scope>
    <scope>SUBUNIT</scope>
</reference>
<reference key="5">
    <citation type="journal article" date="1999" name="J. Biol. Chem.">
        <title>The action of N-terminal acetyltransferases on yeast ribosomal proteins.</title>
        <authorList>
            <person name="Arnold R.J."/>
            <person name="Polevoda B."/>
            <person name="Reilly J.P."/>
            <person name="Sherman F."/>
        </authorList>
    </citation>
    <scope>CLEAVAGE OF INITIATOR METHIONINE</scope>
    <scope>ACETYLATION AT SER-2 BY NATA</scope>
</reference>
<reference key="6">
    <citation type="journal article" date="2003" name="Nature">
        <title>Global analysis of protein localization in budding yeast.</title>
        <authorList>
            <person name="Huh W.-K."/>
            <person name="Falvo J.V."/>
            <person name="Gerke L.C."/>
            <person name="Carroll A.S."/>
            <person name="Howson R.W."/>
            <person name="Weissman J.S."/>
            <person name="O'Shea E.K."/>
        </authorList>
    </citation>
    <scope>SUBCELLULAR LOCATION [LARGE SCALE ANALYSIS]</scope>
</reference>
<reference key="7">
    <citation type="journal article" date="2003" name="Nature">
        <title>Global analysis of protein expression in yeast.</title>
        <authorList>
            <person name="Ghaemmaghami S."/>
            <person name="Huh W.-K."/>
            <person name="Bower K."/>
            <person name="Howson R.W."/>
            <person name="Belle A."/>
            <person name="Dephoure N."/>
            <person name="O'Shea E.K."/>
            <person name="Weissman J.S."/>
        </authorList>
    </citation>
    <scope>LEVEL OF PROTEIN EXPRESSION [LARGE SCALE ANALYSIS]</scope>
</reference>
<reference key="8">
    <citation type="journal article" date="2012" name="Proc. Natl. Acad. Sci. U.S.A.">
        <title>N-terminal acetylome analyses and functional insights of the N-terminal acetyltransferase NatB.</title>
        <authorList>
            <person name="Van Damme P."/>
            <person name="Lasa M."/>
            <person name="Polevoda B."/>
            <person name="Gazquez C."/>
            <person name="Elosegui-Artola A."/>
            <person name="Kim D.S."/>
            <person name="De Juan-Pardo E."/>
            <person name="Demeyer K."/>
            <person name="Hole K."/>
            <person name="Larrea E."/>
            <person name="Timmerman E."/>
            <person name="Prieto J."/>
            <person name="Arnesen T."/>
            <person name="Sherman F."/>
            <person name="Gevaert K."/>
            <person name="Aldabe R."/>
        </authorList>
    </citation>
    <scope>ACETYLATION [LARGE SCALE ANALYSIS] AT SER-2</scope>
    <scope>CLEAVAGE OF INITIATOR METHIONINE [LARGE SCALE ANALYSIS]</scope>
    <scope>IDENTIFICATION BY MASS SPECTROMETRY [LARGE SCALE ANALYSIS]</scope>
</reference>
<reference key="9">
    <citation type="journal article" date="2012" name="Proteomics">
        <title>Sites of ubiquitin attachment in Saccharomyces cerevisiae.</title>
        <authorList>
            <person name="Starita L.M."/>
            <person name="Lo R.S."/>
            <person name="Eng J.K."/>
            <person name="von Haller P.D."/>
            <person name="Fields S."/>
        </authorList>
    </citation>
    <scope>UBIQUITINATION [LARGE SCALE ANALYSIS] AT LYS-36; LYS-49; LYS-80 AND LYS-96</scope>
    <scope>IDENTIFICATION BY MASS SPECTROMETRY [LARGE SCALE ANALYSIS]</scope>
</reference>
<reference key="10">
    <citation type="journal article" date="2012" name="Proteomics">
        <title>Methylation of translation-associated proteins in Saccharomyces cerevisiae: Identification of methylated lysines and their methyltransferases.</title>
        <authorList>
            <person name="Couttas T.A."/>
            <person name="Raftery M.J."/>
            <person name="Padula M.P."/>
            <person name="Herbert B.R."/>
            <person name="Wilkins M.R."/>
        </authorList>
    </citation>
    <scope>METHYLATION AT LYS-48 BY RKM1</scope>
</reference>
<reference key="11">
    <citation type="journal article" date="2014" name="Curr. Opin. Struct. Biol.">
        <title>A new system for naming ribosomal proteins.</title>
        <authorList>
            <person name="Ban N."/>
            <person name="Beckmann R."/>
            <person name="Cate J.H.D."/>
            <person name="Dinman J.D."/>
            <person name="Dragon F."/>
            <person name="Ellis S.R."/>
            <person name="Lafontaine D.L.J."/>
            <person name="Lindahl L."/>
            <person name="Liljas A."/>
            <person name="Lipton J.M."/>
            <person name="McAlear M.A."/>
            <person name="Moore P.B."/>
            <person name="Noller H.F."/>
            <person name="Ortega J."/>
            <person name="Panse V.G."/>
            <person name="Ramakrishnan V."/>
            <person name="Spahn C.M.T."/>
            <person name="Steitz T.A."/>
            <person name="Tchorzewski M."/>
            <person name="Tollervey D."/>
            <person name="Warren A.J."/>
            <person name="Williamson J.R."/>
            <person name="Wilson D."/>
            <person name="Yonath A."/>
            <person name="Yusupov M."/>
        </authorList>
    </citation>
    <scope>NOMENCLATURE</scope>
</reference>
<reference key="12">
    <citation type="journal article" date="2001" name="Cell">
        <title>Structure of the 80S ribosome from Saccharomyces cerevisiae -- tRNA-ribosome and subunit-subunit interactions.</title>
        <authorList>
            <person name="Spahn C.M.T."/>
            <person name="Beckmann R."/>
            <person name="Eswar N."/>
            <person name="Penczek P.A."/>
            <person name="Sali A."/>
            <person name="Blobel G."/>
            <person name="Frank J."/>
        </authorList>
    </citation>
    <scope>3D-STRUCTURE MODELING OF 15-145</scope>
    <scope>ELECTRON MICROSCOPY</scope>
</reference>
<reference key="13">
    <citation type="journal article" date="2004" name="EMBO J.">
        <title>Domain movements of elongation factor eEF2 and the eukaryotic 80S ribosome facilitate tRNA translocation.</title>
        <authorList>
            <person name="Spahn C.M.T."/>
            <person name="Gomez-Lorenzo M.G."/>
            <person name="Grassucci R.A."/>
            <person name="Joergensen R."/>
            <person name="Andersen G.R."/>
            <person name="Beckmann R."/>
            <person name="Penczek P.A."/>
            <person name="Ballesta J.P.G."/>
            <person name="Frank J."/>
        </authorList>
    </citation>
    <scope>3D-STRUCTURE MODELING OF 15-146</scope>
    <scope>ELECTRON MICROSCOPY</scope>
</reference>
<reference key="14">
    <citation type="journal article" date="2010" name="Science">
        <title>Crystal structure of the eukaryotic ribosome.</title>
        <authorList>
            <person name="Ben-Shem A."/>
            <person name="Jenner L."/>
            <person name="Yusupova G."/>
            <person name="Yusupov M."/>
        </authorList>
    </citation>
    <scope>X-RAY CRYSTALLOGRAPHY (4.00 ANGSTROMS) OF 80S RIBOSOME</scope>
</reference>
<reference key="15">
    <citation type="journal article" date="2011" name="Science">
        <title>The structure of the eukaryotic ribosome at 3.0 A resolution.</title>
        <authorList>
            <person name="Ben-Shem A."/>
            <person name="Garreau de Loubresse N."/>
            <person name="Melnikov S."/>
            <person name="Jenner L."/>
            <person name="Yusupova G."/>
            <person name="Yusupov M."/>
        </authorList>
    </citation>
    <scope>X-RAY CRYSTALLOGRAPHY (3.00 ANGSTROMS) OF 80S RIBOSOME</scope>
</reference>
<evidence type="ECO:0000269" key="1">
    <source>
    </source>
</evidence>
<evidence type="ECO:0000269" key="2">
    <source>
    </source>
</evidence>
<evidence type="ECO:0000269" key="3">
    <source>
    </source>
</evidence>
<evidence type="ECO:0000269" key="4">
    <source>
    </source>
</evidence>
<evidence type="ECO:0000269" key="5">
    <source>
    </source>
</evidence>
<evidence type="ECO:0000269" key="6">
    <source ref="3"/>
</evidence>
<evidence type="ECO:0000303" key="7">
    <source>
    </source>
</evidence>
<evidence type="ECO:0000303" key="8">
    <source>
    </source>
</evidence>
<evidence type="ECO:0000305" key="9"/>
<evidence type="ECO:0000305" key="10">
    <source>
    </source>
</evidence>
<evidence type="ECO:0000305" key="11">
    <source>
    </source>
</evidence>
<evidence type="ECO:0007744" key="12">
    <source>
    </source>
</evidence>
<evidence type="ECO:0007744" key="13">
    <source>
    </source>
</evidence>
<evidence type="ECO:0007829" key="14">
    <source>
        <dbReference type="PDB" id="6ZVI"/>
    </source>
</evidence>
<evidence type="ECO:0007829" key="15">
    <source>
        <dbReference type="PDB" id="7A1G"/>
    </source>
</evidence>
<evidence type="ECO:0007829" key="16">
    <source>
        <dbReference type="PDB" id="8C00"/>
    </source>
</evidence>
<evidence type="ECO:0007829" key="17">
    <source>
        <dbReference type="PDB" id="8C01"/>
    </source>
</evidence>
<evidence type="ECO:0007829" key="18">
    <source>
        <dbReference type="PDB" id="8CAS"/>
    </source>
</evidence>
<keyword id="KW-0002">3D-structure</keyword>
<keyword id="KW-0007">Acetylation</keyword>
<keyword id="KW-0963">Cytoplasm</keyword>
<keyword id="KW-0903">Direct protein sequencing</keyword>
<keyword id="KW-1017">Isopeptide bond</keyword>
<keyword id="KW-0488">Methylation</keyword>
<keyword id="KW-1185">Reference proteome</keyword>
<keyword id="KW-0687">Ribonucleoprotein</keyword>
<keyword id="KW-0689">Ribosomal protein</keyword>
<keyword id="KW-0694">RNA-binding</keyword>
<keyword id="KW-0699">rRNA-binding</keyword>
<keyword id="KW-0832">Ubl conjugation</keyword>